<accession>Q7V990</accession>
<evidence type="ECO:0000255" key="1">
    <source>
        <dbReference type="HAMAP-Rule" id="MF_00418"/>
    </source>
</evidence>
<evidence type="ECO:0000305" key="2"/>
<sequence length="302" mass="31387">MSSAAELSPTPFGRLLTAMVTPFDADGCVDLALAGRLARYLVDEGSDGLVVCGTTGESPTLSWQEQHQLLGVVRQAVGPGVKVLAGTGSNSTAEAIEATTQAAAVGADGALVVVPYYNKPPQEGLEAHFRAIAQAAPELPLMLYNIPGRTGCSLAPATVARLMECPNVVSFKAASGTTDEVTQLRLQCGSKLAVYSGDDGLLLPMLSVGAVGVVSVASHLVGRRLKAMIEAYLNGQGALALSYHEQLQPLFKALFVTTNPIPVKAALELSGWPVGSPRLPLLPLDPVMRDALSNTLTALCQT</sequence>
<gene>
    <name evidence="1" type="primary">dapA</name>
    <name type="ordered locus">PMT_0065</name>
</gene>
<protein>
    <recommendedName>
        <fullName evidence="1">4-hydroxy-tetrahydrodipicolinate synthase</fullName>
        <shortName evidence="1">HTPA synthase</shortName>
        <ecNumber evidence="1">4.3.3.7</ecNumber>
    </recommendedName>
</protein>
<feature type="chain" id="PRO_0000103136" description="4-hydroxy-tetrahydrodipicolinate synthase">
    <location>
        <begin position="1"/>
        <end position="302"/>
    </location>
</feature>
<feature type="active site" description="Proton donor/acceptor" evidence="1">
    <location>
        <position position="144"/>
    </location>
</feature>
<feature type="active site" description="Schiff-base intermediate with substrate" evidence="1">
    <location>
        <position position="172"/>
    </location>
</feature>
<feature type="binding site" evidence="1">
    <location>
        <position position="55"/>
    </location>
    <ligand>
        <name>pyruvate</name>
        <dbReference type="ChEBI" id="CHEBI:15361"/>
    </ligand>
</feature>
<feature type="binding site" evidence="1">
    <location>
        <position position="214"/>
    </location>
    <ligand>
        <name>pyruvate</name>
        <dbReference type="ChEBI" id="CHEBI:15361"/>
    </ligand>
</feature>
<feature type="site" description="Part of a proton relay during catalysis" evidence="1">
    <location>
        <position position="54"/>
    </location>
</feature>
<feature type="site" description="Part of a proton relay during catalysis" evidence="1">
    <location>
        <position position="117"/>
    </location>
</feature>
<keyword id="KW-0028">Amino-acid biosynthesis</keyword>
<keyword id="KW-0963">Cytoplasm</keyword>
<keyword id="KW-0220">Diaminopimelate biosynthesis</keyword>
<keyword id="KW-0456">Lyase</keyword>
<keyword id="KW-0457">Lysine biosynthesis</keyword>
<keyword id="KW-1185">Reference proteome</keyword>
<keyword id="KW-0704">Schiff base</keyword>
<comment type="function">
    <text evidence="1">Catalyzes the condensation of (S)-aspartate-beta-semialdehyde [(S)-ASA] and pyruvate to 4-hydroxy-tetrahydrodipicolinate (HTPA).</text>
</comment>
<comment type="catalytic activity">
    <reaction evidence="1">
        <text>L-aspartate 4-semialdehyde + pyruvate = (2S,4S)-4-hydroxy-2,3,4,5-tetrahydrodipicolinate + H2O + H(+)</text>
        <dbReference type="Rhea" id="RHEA:34171"/>
        <dbReference type="ChEBI" id="CHEBI:15361"/>
        <dbReference type="ChEBI" id="CHEBI:15377"/>
        <dbReference type="ChEBI" id="CHEBI:15378"/>
        <dbReference type="ChEBI" id="CHEBI:67139"/>
        <dbReference type="ChEBI" id="CHEBI:537519"/>
        <dbReference type="EC" id="4.3.3.7"/>
    </reaction>
</comment>
<comment type="pathway">
    <text evidence="1">Amino-acid biosynthesis; L-lysine biosynthesis via DAP pathway; (S)-tetrahydrodipicolinate from L-aspartate: step 3/4.</text>
</comment>
<comment type="subunit">
    <text evidence="1">Homotetramer; dimer of dimers.</text>
</comment>
<comment type="subcellular location">
    <subcellularLocation>
        <location evidence="1">Cytoplasm</location>
    </subcellularLocation>
</comment>
<comment type="similarity">
    <text evidence="1">Belongs to the DapA family.</text>
</comment>
<comment type="caution">
    <text evidence="2">Was originally thought to be a dihydrodipicolinate synthase (DHDPS), catalyzing the condensation of (S)-aspartate-beta-semialdehyde [(S)-ASA] and pyruvate to dihydrodipicolinate (DHDP). However, it was shown in E.coli that the product of the enzymatic reaction is not dihydrodipicolinate but in fact (4S)-4-hydroxy-2,3,4,5-tetrahydro-(2S)-dipicolinic acid (HTPA), and that the consecutive dehydration reaction leading to DHDP is not spontaneous but catalyzed by DapB.</text>
</comment>
<organism>
    <name type="scientific">Prochlorococcus marinus (strain MIT 9313)</name>
    <dbReference type="NCBI Taxonomy" id="74547"/>
    <lineage>
        <taxon>Bacteria</taxon>
        <taxon>Bacillati</taxon>
        <taxon>Cyanobacteriota</taxon>
        <taxon>Cyanophyceae</taxon>
        <taxon>Synechococcales</taxon>
        <taxon>Prochlorococcaceae</taxon>
        <taxon>Prochlorococcus</taxon>
    </lineage>
</organism>
<dbReference type="EC" id="4.3.3.7" evidence="1"/>
<dbReference type="EMBL" id="BX548175">
    <property type="protein sequence ID" value="CAE20240.1"/>
    <property type="molecule type" value="Genomic_DNA"/>
</dbReference>
<dbReference type="RefSeq" id="WP_011129444.1">
    <property type="nucleotide sequence ID" value="NC_005071.1"/>
</dbReference>
<dbReference type="SMR" id="Q7V990"/>
<dbReference type="KEGG" id="pmt:PMT_0065"/>
<dbReference type="eggNOG" id="COG0329">
    <property type="taxonomic scope" value="Bacteria"/>
</dbReference>
<dbReference type="HOGENOM" id="CLU_049343_7_1_3"/>
<dbReference type="OrthoDB" id="9782828at2"/>
<dbReference type="UniPathway" id="UPA00034">
    <property type="reaction ID" value="UER00017"/>
</dbReference>
<dbReference type="Proteomes" id="UP000001423">
    <property type="component" value="Chromosome"/>
</dbReference>
<dbReference type="GO" id="GO:0005829">
    <property type="term" value="C:cytosol"/>
    <property type="evidence" value="ECO:0007669"/>
    <property type="project" value="TreeGrafter"/>
</dbReference>
<dbReference type="GO" id="GO:0008840">
    <property type="term" value="F:4-hydroxy-tetrahydrodipicolinate synthase activity"/>
    <property type="evidence" value="ECO:0007669"/>
    <property type="project" value="UniProtKB-UniRule"/>
</dbReference>
<dbReference type="GO" id="GO:0019877">
    <property type="term" value="P:diaminopimelate biosynthetic process"/>
    <property type="evidence" value="ECO:0007669"/>
    <property type="project" value="UniProtKB-UniRule"/>
</dbReference>
<dbReference type="GO" id="GO:0009089">
    <property type="term" value="P:lysine biosynthetic process via diaminopimelate"/>
    <property type="evidence" value="ECO:0007669"/>
    <property type="project" value="UniProtKB-UniRule"/>
</dbReference>
<dbReference type="CDD" id="cd00950">
    <property type="entry name" value="DHDPS"/>
    <property type="match status" value="1"/>
</dbReference>
<dbReference type="Gene3D" id="3.20.20.70">
    <property type="entry name" value="Aldolase class I"/>
    <property type="match status" value="1"/>
</dbReference>
<dbReference type="HAMAP" id="MF_00418">
    <property type="entry name" value="DapA"/>
    <property type="match status" value="1"/>
</dbReference>
<dbReference type="InterPro" id="IPR013785">
    <property type="entry name" value="Aldolase_TIM"/>
</dbReference>
<dbReference type="InterPro" id="IPR005263">
    <property type="entry name" value="DapA"/>
</dbReference>
<dbReference type="InterPro" id="IPR002220">
    <property type="entry name" value="DapA-like"/>
</dbReference>
<dbReference type="InterPro" id="IPR020625">
    <property type="entry name" value="Schiff_base-form_aldolases_AS"/>
</dbReference>
<dbReference type="InterPro" id="IPR020624">
    <property type="entry name" value="Schiff_base-form_aldolases_CS"/>
</dbReference>
<dbReference type="NCBIfam" id="TIGR00674">
    <property type="entry name" value="dapA"/>
    <property type="match status" value="1"/>
</dbReference>
<dbReference type="PANTHER" id="PTHR12128:SF66">
    <property type="entry name" value="4-HYDROXY-2-OXOGLUTARATE ALDOLASE, MITOCHONDRIAL"/>
    <property type="match status" value="1"/>
</dbReference>
<dbReference type="PANTHER" id="PTHR12128">
    <property type="entry name" value="DIHYDRODIPICOLINATE SYNTHASE"/>
    <property type="match status" value="1"/>
</dbReference>
<dbReference type="Pfam" id="PF00701">
    <property type="entry name" value="DHDPS"/>
    <property type="match status" value="1"/>
</dbReference>
<dbReference type="PIRSF" id="PIRSF001365">
    <property type="entry name" value="DHDPS"/>
    <property type="match status" value="1"/>
</dbReference>
<dbReference type="PRINTS" id="PR00146">
    <property type="entry name" value="DHPICSNTHASE"/>
</dbReference>
<dbReference type="SMART" id="SM01130">
    <property type="entry name" value="DHDPS"/>
    <property type="match status" value="1"/>
</dbReference>
<dbReference type="SUPFAM" id="SSF51569">
    <property type="entry name" value="Aldolase"/>
    <property type="match status" value="1"/>
</dbReference>
<dbReference type="PROSITE" id="PS00665">
    <property type="entry name" value="DHDPS_1"/>
    <property type="match status" value="1"/>
</dbReference>
<dbReference type="PROSITE" id="PS00666">
    <property type="entry name" value="DHDPS_2"/>
    <property type="match status" value="1"/>
</dbReference>
<proteinExistence type="inferred from homology"/>
<name>DAPA_PROMM</name>
<reference key="1">
    <citation type="journal article" date="2003" name="Nature">
        <title>Genome divergence in two Prochlorococcus ecotypes reflects oceanic niche differentiation.</title>
        <authorList>
            <person name="Rocap G."/>
            <person name="Larimer F.W."/>
            <person name="Lamerdin J.E."/>
            <person name="Malfatti S."/>
            <person name="Chain P."/>
            <person name="Ahlgren N.A."/>
            <person name="Arellano A."/>
            <person name="Coleman M."/>
            <person name="Hauser L."/>
            <person name="Hess W.R."/>
            <person name="Johnson Z.I."/>
            <person name="Land M.L."/>
            <person name="Lindell D."/>
            <person name="Post A.F."/>
            <person name="Regala W."/>
            <person name="Shah M."/>
            <person name="Shaw S.L."/>
            <person name="Steglich C."/>
            <person name="Sullivan M.B."/>
            <person name="Ting C.S."/>
            <person name="Tolonen A."/>
            <person name="Webb E.A."/>
            <person name="Zinser E.R."/>
            <person name="Chisholm S.W."/>
        </authorList>
    </citation>
    <scope>NUCLEOTIDE SEQUENCE [LARGE SCALE GENOMIC DNA]</scope>
    <source>
        <strain>MIT 9313</strain>
    </source>
</reference>